<proteinExistence type="inferred from homology"/>
<comment type="function">
    <text evidence="1">Specifically methylates the uridine in position 2552 of 23S rRNA at the 2'-O position of the ribose in the fully assembled 50S ribosomal subunit.</text>
</comment>
<comment type="catalytic activity">
    <reaction evidence="1">
        <text>uridine(2552) in 23S rRNA + S-adenosyl-L-methionine = 2'-O-methyluridine(2552) in 23S rRNA + S-adenosyl-L-homocysteine + H(+)</text>
        <dbReference type="Rhea" id="RHEA:42720"/>
        <dbReference type="Rhea" id="RHEA-COMP:10202"/>
        <dbReference type="Rhea" id="RHEA-COMP:10203"/>
        <dbReference type="ChEBI" id="CHEBI:15378"/>
        <dbReference type="ChEBI" id="CHEBI:57856"/>
        <dbReference type="ChEBI" id="CHEBI:59789"/>
        <dbReference type="ChEBI" id="CHEBI:65315"/>
        <dbReference type="ChEBI" id="CHEBI:74478"/>
        <dbReference type="EC" id="2.1.1.166"/>
    </reaction>
</comment>
<comment type="subcellular location">
    <subcellularLocation>
        <location evidence="1">Cytoplasm</location>
    </subcellularLocation>
</comment>
<comment type="similarity">
    <text evidence="1">Belongs to the class I-like SAM-binding methyltransferase superfamily. RNA methyltransferase RlmE family.</text>
</comment>
<evidence type="ECO:0000255" key="1">
    <source>
        <dbReference type="HAMAP-Rule" id="MF_01547"/>
    </source>
</evidence>
<keyword id="KW-0963">Cytoplasm</keyword>
<keyword id="KW-0489">Methyltransferase</keyword>
<keyword id="KW-0698">rRNA processing</keyword>
<keyword id="KW-0949">S-adenosyl-L-methionine</keyword>
<keyword id="KW-0808">Transferase</keyword>
<accession>Q6G0S9</accession>
<organism>
    <name type="scientific">Bartonella quintana (strain Toulouse)</name>
    <name type="common">Rochalimaea quintana</name>
    <dbReference type="NCBI Taxonomy" id="283165"/>
    <lineage>
        <taxon>Bacteria</taxon>
        <taxon>Pseudomonadati</taxon>
        <taxon>Pseudomonadota</taxon>
        <taxon>Alphaproteobacteria</taxon>
        <taxon>Hyphomicrobiales</taxon>
        <taxon>Bartonellaceae</taxon>
        <taxon>Bartonella</taxon>
    </lineage>
</organism>
<dbReference type="EC" id="2.1.1.166" evidence="1"/>
<dbReference type="EMBL" id="BX897700">
    <property type="protein sequence ID" value="CAF25648.1"/>
    <property type="molecule type" value="Genomic_DNA"/>
</dbReference>
<dbReference type="RefSeq" id="WP_011178966.1">
    <property type="nucleotide sequence ID" value="NC_005955.1"/>
</dbReference>
<dbReference type="SMR" id="Q6G0S9"/>
<dbReference type="KEGG" id="bqu:BQ01450"/>
<dbReference type="eggNOG" id="COG0293">
    <property type="taxonomic scope" value="Bacteria"/>
</dbReference>
<dbReference type="HOGENOM" id="CLU_009422_4_0_5"/>
<dbReference type="OrthoDB" id="9790080at2"/>
<dbReference type="Proteomes" id="UP000000597">
    <property type="component" value="Chromosome"/>
</dbReference>
<dbReference type="GO" id="GO:0005737">
    <property type="term" value="C:cytoplasm"/>
    <property type="evidence" value="ECO:0007669"/>
    <property type="project" value="UniProtKB-SubCell"/>
</dbReference>
<dbReference type="GO" id="GO:0008650">
    <property type="term" value="F:rRNA (uridine-2'-O-)-methyltransferase activity"/>
    <property type="evidence" value="ECO:0007669"/>
    <property type="project" value="UniProtKB-UniRule"/>
</dbReference>
<dbReference type="Gene3D" id="3.40.50.150">
    <property type="entry name" value="Vaccinia Virus protein VP39"/>
    <property type="match status" value="1"/>
</dbReference>
<dbReference type="HAMAP" id="MF_01547">
    <property type="entry name" value="RNA_methyltr_E"/>
    <property type="match status" value="1"/>
</dbReference>
<dbReference type="InterPro" id="IPR050082">
    <property type="entry name" value="RNA_methyltr_RlmE"/>
</dbReference>
<dbReference type="InterPro" id="IPR002877">
    <property type="entry name" value="RNA_MeTrfase_FtsJ_dom"/>
</dbReference>
<dbReference type="InterPro" id="IPR015507">
    <property type="entry name" value="rRNA-MeTfrase_E"/>
</dbReference>
<dbReference type="InterPro" id="IPR029063">
    <property type="entry name" value="SAM-dependent_MTases_sf"/>
</dbReference>
<dbReference type="PANTHER" id="PTHR10920">
    <property type="entry name" value="RIBOSOMAL RNA METHYLTRANSFERASE"/>
    <property type="match status" value="1"/>
</dbReference>
<dbReference type="PANTHER" id="PTHR10920:SF18">
    <property type="entry name" value="RRNA METHYLTRANSFERASE 2, MITOCHONDRIAL"/>
    <property type="match status" value="1"/>
</dbReference>
<dbReference type="Pfam" id="PF01728">
    <property type="entry name" value="FtsJ"/>
    <property type="match status" value="1"/>
</dbReference>
<dbReference type="PIRSF" id="PIRSF005461">
    <property type="entry name" value="23S_rRNA_mtase"/>
    <property type="match status" value="1"/>
</dbReference>
<dbReference type="SUPFAM" id="SSF53335">
    <property type="entry name" value="S-adenosyl-L-methionine-dependent methyltransferases"/>
    <property type="match status" value="1"/>
</dbReference>
<feature type="chain" id="PRO_0000155468" description="Ribosomal RNA large subunit methyltransferase E">
    <location>
        <begin position="1"/>
        <end position="241"/>
    </location>
</feature>
<feature type="active site" description="Proton acceptor" evidence="1">
    <location>
        <position position="191"/>
    </location>
</feature>
<feature type="binding site" evidence="1">
    <location>
        <position position="88"/>
    </location>
    <ligand>
        <name>S-adenosyl-L-methionine</name>
        <dbReference type="ChEBI" id="CHEBI:59789"/>
    </ligand>
</feature>
<feature type="binding site" evidence="1">
    <location>
        <position position="90"/>
    </location>
    <ligand>
        <name>S-adenosyl-L-methionine</name>
        <dbReference type="ChEBI" id="CHEBI:59789"/>
    </ligand>
</feature>
<feature type="binding site" evidence="1">
    <location>
        <position position="111"/>
    </location>
    <ligand>
        <name>S-adenosyl-L-methionine</name>
        <dbReference type="ChEBI" id="CHEBI:59789"/>
    </ligand>
</feature>
<feature type="binding site" evidence="1">
    <location>
        <position position="127"/>
    </location>
    <ligand>
        <name>S-adenosyl-L-methionine</name>
        <dbReference type="ChEBI" id="CHEBI:59789"/>
    </ligand>
</feature>
<feature type="binding site" evidence="1">
    <location>
        <position position="151"/>
    </location>
    <ligand>
        <name>S-adenosyl-L-methionine</name>
        <dbReference type="ChEBI" id="CHEBI:59789"/>
    </ligand>
</feature>
<sequence length="241" mass="26686">MKKTKKTPTGGYGGSGSHKLYQRVKKKAGTIKASSRRWLERHLNDPYVHQSKVDGYRSRAAYKLIEMNERYKFLKKGQKIIDLGAAPGGWCQVAQRIVGSSDEKPSVVGIDYLPVVPLPGVIMLEMDFLHTDAPQKLIDALGTKPDVVLSDMAAPTTGHRQTDYLRTTYLCEVAADFALSVLKSGGHFLVKAFQGGAENTLLTTLKQNFKTVHHVKPPASRTESVELYLLALEFKAKTEVK</sequence>
<reference key="1">
    <citation type="journal article" date="2004" name="Proc. Natl. Acad. Sci. U.S.A.">
        <title>The louse-borne human pathogen Bartonella quintana is a genomic derivative of the zoonotic agent Bartonella henselae.</title>
        <authorList>
            <person name="Alsmark U.C.M."/>
            <person name="Frank A.C."/>
            <person name="Karlberg E.O."/>
            <person name="Legault B.-A."/>
            <person name="Ardell D.H."/>
            <person name="Canbaeck B."/>
            <person name="Eriksson A.-S."/>
            <person name="Naeslund A.K."/>
            <person name="Handley S.A."/>
            <person name="Huvet M."/>
            <person name="La Scola B."/>
            <person name="Holmberg M."/>
            <person name="Andersson S.G.E."/>
        </authorList>
    </citation>
    <scope>NUCLEOTIDE SEQUENCE [LARGE SCALE GENOMIC DNA]</scope>
    <source>
        <strain>Toulouse</strain>
    </source>
</reference>
<name>RLME_BARQU</name>
<gene>
    <name evidence="1" type="primary">rlmE</name>
    <name evidence="1" type="synonym">ftsJ</name>
    <name evidence="1" type="synonym">rrmJ</name>
    <name type="ordered locus">BQ01450</name>
</gene>
<protein>
    <recommendedName>
        <fullName evidence="1">Ribosomal RNA large subunit methyltransferase E</fullName>
        <ecNumber evidence="1">2.1.1.166</ecNumber>
    </recommendedName>
    <alternativeName>
        <fullName evidence="1">23S rRNA Um2552 methyltransferase</fullName>
    </alternativeName>
    <alternativeName>
        <fullName evidence="1">rRNA (uridine-2'-O-)-methyltransferase</fullName>
    </alternativeName>
</protein>